<reference key="1">
    <citation type="submission" date="2006-05" db="EMBL/GenBank/DDBJ databases">
        <title>Complete sequence of chromosome 1 of Burkholderia cenocepacia AU 1054.</title>
        <authorList>
            <consortium name="US DOE Joint Genome Institute"/>
            <person name="Copeland A."/>
            <person name="Lucas S."/>
            <person name="Lapidus A."/>
            <person name="Barry K."/>
            <person name="Detter J.C."/>
            <person name="Glavina del Rio T."/>
            <person name="Hammon N."/>
            <person name="Israni S."/>
            <person name="Dalin E."/>
            <person name="Tice H."/>
            <person name="Pitluck S."/>
            <person name="Chain P."/>
            <person name="Malfatti S."/>
            <person name="Shin M."/>
            <person name="Vergez L."/>
            <person name="Schmutz J."/>
            <person name="Larimer F."/>
            <person name="Land M."/>
            <person name="Hauser L."/>
            <person name="Kyrpides N."/>
            <person name="Lykidis A."/>
            <person name="LiPuma J.J."/>
            <person name="Konstantinidis K."/>
            <person name="Tiedje J.M."/>
            <person name="Richardson P."/>
        </authorList>
    </citation>
    <scope>NUCLEOTIDE SEQUENCE [LARGE SCALE GENOMIC DNA]</scope>
    <source>
        <strain>AU 1054</strain>
    </source>
</reference>
<organism>
    <name type="scientific">Burkholderia orbicola (strain AU 1054)</name>
    <dbReference type="NCBI Taxonomy" id="331271"/>
    <lineage>
        <taxon>Bacteria</taxon>
        <taxon>Pseudomonadati</taxon>
        <taxon>Pseudomonadota</taxon>
        <taxon>Betaproteobacteria</taxon>
        <taxon>Burkholderiales</taxon>
        <taxon>Burkholderiaceae</taxon>
        <taxon>Burkholderia</taxon>
        <taxon>Burkholderia cepacia complex</taxon>
        <taxon>Burkholderia orbicola</taxon>
    </lineage>
</organism>
<dbReference type="EC" id="2.7.7.8" evidence="1"/>
<dbReference type="EMBL" id="CP000378">
    <property type="protein sequence ID" value="ABF76546.1"/>
    <property type="molecule type" value="Genomic_DNA"/>
</dbReference>
<dbReference type="SMR" id="Q1BV09"/>
<dbReference type="HOGENOM" id="CLU_004217_2_2_4"/>
<dbReference type="GO" id="GO:0005829">
    <property type="term" value="C:cytosol"/>
    <property type="evidence" value="ECO:0007669"/>
    <property type="project" value="TreeGrafter"/>
</dbReference>
<dbReference type="GO" id="GO:0000175">
    <property type="term" value="F:3'-5'-RNA exonuclease activity"/>
    <property type="evidence" value="ECO:0007669"/>
    <property type="project" value="TreeGrafter"/>
</dbReference>
<dbReference type="GO" id="GO:0000287">
    <property type="term" value="F:magnesium ion binding"/>
    <property type="evidence" value="ECO:0007669"/>
    <property type="project" value="UniProtKB-UniRule"/>
</dbReference>
<dbReference type="GO" id="GO:0004654">
    <property type="term" value="F:polyribonucleotide nucleotidyltransferase activity"/>
    <property type="evidence" value="ECO:0007669"/>
    <property type="project" value="UniProtKB-UniRule"/>
</dbReference>
<dbReference type="GO" id="GO:0003723">
    <property type="term" value="F:RNA binding"/>
    <property type="evidence" value="ECO:0007669"/>
    <property type="project" value="UniProtKB-UniRule"/>
</dbReference>
<dbReference type="GO" id="GO:0006402">
    <property type="term" value="P:mRNA catabolic process"/>
    <property type="evidence" value="ECO:0007669"/>
    <property type="project" value="UniProtKB-UniRule"/>
</dbReference>
<dbReference type="GO" id="GO:0006396">
    <property type="term" value="P:RNA processing"/>
    <property type="evidence" value="ECO:0007669"/>
    <property type="project" value="InterPro"/>
</dbReference>
<dbReference type="CDD" id="cd02393">
    <property type="entry name" value="KH-I_PNPase"/>
    <property type="match status" value="1"/>
</dbReference>
<dbReference type="CDD" id="cd11363">
    <property type="entry name" value="RNase_PH_PNPase_1"/>
    <property type="match status" value="1"/>
</dbReference>
<dbReference type="CDD" id="cd11364">
    <property type="entry name" value="RNase_PH_PNPase_2"/>
    <property type="match status" value="1"/>
</dbReference>
<dbReference type="CDD" id="cd04472">
    <property type="entry name" value="S1_PNPase"/>
    <property type="match status" value="1"/>
</dbReference>
<dbReference type="FunFam" id="3.30.1370.10:FF:000001">
    <property type="entry name" value="Polyribonucleotide nucleotidyltransferase"/>
    <property type="match status" value="1"/>
</dbReference>
<dbReference type="FunFam" id="3.30.230.70:FF:000001">
    <property type="entry name" value="Polyribonucleotide nucleotidyltransferase"/>
    <property type="match status" value="1"/>
</dbReference>
<dbReference type="FunFam" id="3.30.230.70:FF:000002">
    <property type="entry name" value="Polyribonucleotide nucleotidyltransferase"/>
    <property type="match status" value="1"/>
</dbReference>
<dbReference type="FunFam" id="2.40.50.140:FF:000189">
    <property type="entry name" value="Polyribonucleotide nucleotidyltransferase, putative"/>
    <property type="match status" value="1"/>
</dbReference>
<dbReference type="Gene3D" id="3.30.230.70">
    <property type="entry name" value="GHMP Kinase, N-terminal domain"/>
    <property type="match status" value="2"/>
</dbReference>
<dbReference type="Gene3D" id="3.30.1370.10">
    <property type="entry name" value="K Homology domain, type 1"/>
    <property type="match status" value="1"/>
</dbReference>
<dbReference type="Gene3D" id="2.40.50.140">
    <property type="entry name" value="Nucleic acid-binding proteins"/>
    <property type="match status" value="1"/>
</dbReference>
<dbReference type="HAMAP" id="MF_01595">
    <property type="entry name" value="PNPase"/>
    <property type="match status" value="1"/>
</dbReference>
<dbReference type="InterPro" id="IPR001247">
    <property type="entry name" value="ExoRNase_PH_dom1"/>
</dbReference>
<dbReference type="InterPro" id="IPR015847">
    <property type="entry name" value="ExoRNase_PH_dom2"/>
</dbReference>
<dbReference type="InterPro" id="IPR036345">
    <property type="entry name" value="ExoRNase_PH_dom2_sf"/>
</dbReference>
<dbReference type="InterPro" id="IPR004087">
    <property type="entry name" value="KH_dom"/>
</dbReference>
<dbReference type="InterPro" id="IPR004088">
    <property type="entry name" value="KH_dom_type_1"/>
</dbReference>
<dbReference type="InterPro" id="IPR036612">
    <property type="entry name" value="KH_dom_type_1_sf"/>
</dbReference>
<dbReference type="InterPro" id="IPR012340">
    <property type="entry name" value="NA-bd_OB-fold"/>
</dbReference>
<dbReference type="InterPro" id="IPR012162">
    <property type="entry name" value="PNPase"/>
</dbReference>
<dbReference type="InterPro" id="IPR027408">
    <property type="entry name" value="PNPase/RNase_PH_dom_sf"/>
</dbReference>
<dbReference type="InterPro" id="IPR015848">
    <property type="entry name" value="PNPase_PH_RNA-bd_bac/org-type"/>
</dbReference>
<dbReference type="InterPro" id="IPR020568">
    <property type="entry name" value="Ribosomal_Su5_D2-typ_SF"/>
</dbReference>
<dbReference type="InterPro" id="IPR003029">
    <property type="entry name" value="S1_domain"/>
</dbReference>
<dbReference type="NCBIfam" id="TIGR03591">
    <property type="entry name" value="polynuc_phos"/>
    <property type="match status" value="1"/>
</dbReference>
<dbReference type="NCBIfam" id="NF008805">
    <property type="entry name" value="PRK11824.1"/>
    <property type="match status" value="1"/>
</dbReference>
<dbReference type="PANTHER" id="PTHR11252">
    <property type="entry name" value="POLYRIBONUCLEOTIDE NUCLEOTIDYLTRANSFERASE"/>
    <property type="match status" value="1"/>
</dbReference>
<dbReference type="PANTHER" id="PTHR11252:SF0">
    <property type="entry name" value="POLYRIBONUCLEOTIDE NUCLEOTIDYLTRANSFERASE 1, MITOCHONDRIAL"/>
    <property type="match status" value="1"/>
</dbReference>
<dbReference type="Pfam" id="PF00013">
    <property type="entry name" value="KH_1"/>
    <property type="match status" value="1"/>
</dbReference>
<dbReference type="Pfam" id="PF03726">
    <property type="entry name" value="PNPase"/>
    <property type="match status" value="1"/>
</dbReference>
<dbReference type="Pfam" id="PF01138">
    <property type="entry name" value="RNase_PH"/>
    <property type="match status" value="2"/>
</dbReference>
<dbReference type="Pfam" id="PF03725">
    <property type="entry name" value="RNase_PH_C"/>
    <property type="match status" value="2"/>
</dbReference>
<dbReference type="Pfam" id="PF00575">
    <property type="entry name" value="S1"/>
    <property type="match status" value="1"/>
</dbReference>
<dbReference type="PIRSF" id="PIRSF005499">
    <property type="entry name" value="PNPase"/>
    <property type="match status" value="1"/>
</dbReference>
<dbReference type="SMART" id="SM00322">
    <property type="entry name" value="KH"/>
    <property type="match status" value="1"/>
</dbReference>
<dbReference type="SMART" id="SM00316">
    <property type="entry name" value="S1"/>
    <property type="match status" value="1"/>
</dbReference>
<dbReference type="SUPFAM" id="SSF54791">
    <property type="entry name" value="Eukaryotic type KH-domain (KH-domain type I)"/>
    <property type="match status" value="1"/>
</dbReference>
<dbReference type="SUPFAM" id="SSF50249">
    <property type="entry name" value="Nucleic acid-binding proteins"/>
    <property type="match status" value="1"/>
</dbReference>
<dbReference type="SUPFAM" id="SSF55666">
    <property type="entry name" value="Ribonuclease PH domain 2-like"/>
    <property type="match status" value="2"/>
</dbReference>
<dbReference type="SUPFAM" id="SSF54211">
    <property type="entry name" value="Ribosomal protein S5 domain 2-like"/>
    <property type="match status" value="2"/>
</dbReference>
<dbReference type="PROSITE" id="PS50084">
    <property type="entry name" value="KH_TYPE_1"/>
    <property type="match status" value="1"/>
</dbReference>
<dbReference type="PROSITE" id="PS50126">
    <property type="entry name" value="S1"/>
    <property type="match status" value="1"/>
</dbReference>
<feature type="chain" id="PRO_0000329551" description="Polyribonucleotide nucleotidyltransferase">
    <location>
        <begin position="1"/>
        <end position="715"/>
    </location>
</feature>
<feature type="domain" description="KH" evidence="1">
    <location>
        <begin position="560"/>
        <end position="619"/>
    </location>
</feature>
<feature type="domain" description="S1 motif" evidence="1">
    <location>
        <begin position="629"/>
        <end position="697"/>
    </location>
</feature>
<feature type="binding site" evidence="1">
    <location>
        <position position="493"/>
    </location>
    <ligand>
        <name>Mg(2+)</name>
        <dbReference type="ChEBI" id="CHEBI:18420"/>
    </ligand>
</feature>
<feature type="binding site" evidence="1">
    <location>
        <position position="499"/>
    </location>
    <ligand>
        <name>Mg(2+)</name>
        <dbReference type="ChEBI" id="CHEBI:18420"/>
    </ligand>
</feature>
<comment type="function">
    <text evidence="1">Involved in mRNA degradation. Catalyzes the phosphorolysis of single-stranded polyribonucleotides processively in the 3'- to 5'-direction.</text>
</comment>
<comment type="catalytic activity">
    <reaction evidence="1">
        <text>RNA(n+1) + phosphate = RNA(n) + a ribonucleoside 5'-diphosphate</text>
        <dbReference type="Rhea" id="RHEA:22096"/>
        <dbReference type="Rhea" id="RHEA-COMP:14527"/>
        <dbReference type="Rhea" id="RHEA-COMP:17342"/>
        <dbReference type="ChEBI" id="CHEBI:43474"/>
        <dbReference type="ChEBI" id="CHEBI:57930"/>
        <dbReference type="ChEBI" id="CHEBI:140395"/>
        <dbReference type="EC" id="2.7.7.8"/>
    </reaction>
</comment>
<comment type="cofactor">
    <cofactor evidence="1">
        <name>Mg(2+)</name>
        <dbReference type="ChEBI" id="CHEBI:18420"/>
    </cofactor>
</comment>
<comment type="subcellular location">
    <subcellularLocation>
        <location evidence="1">Cytoplasm</location>
    </subcellularLocation>
</comment>
<comment type="similarity">
    <text evidence="1">Belongs to the polyribonucleotide nucleotidyltransferase family.</text>
</comment>
<sequence length="715" mass="77022">MSMFNKVVKEFQWGQHKVRLETGEVARQASGAVIVDVEDTVVLATVVGAKSAKPGQDFFPLTVDYLEKTYSAGKIPGGFFRREGRPSEHETLTSRLIDRPLRPLFPEGFYNEVQVVIHVLSVNPEIPADIPALIGASAALAVSGLPFNGPVGAARVAYIDNAYVLNPTRDQLKASSLDLVVAGTERAVLMVESEADQLSEEVMLGAVVFGHEQMQIAIDAIHELVRDGGKPEWDWQPAPKNEALIARVTELAQNDLLAAYQLRDKQARSAKLKEVYAATSAKLEEDALAAGTVAADKATVGNVLFDIEAKIVRSQILNGEPRIDGRDTRTVRPIEIRTGVLPRTHGSALFTRGETQALVVATLGTKGDEQIIDALEGEYRERFMLHYNMPPFATGETGRVGSPKRREIGHGRLAKRALVKCLPSADEFGYSIRVVSEITESNGSSSMASVCGGCLALMDAGVPMKAHVAGIAMGLILEGNKFAVLTDILGDEDHLGDMDFKVAGTEQGVTALQMDIKIQGITKEIMQVALAQAKEGRLHILGKMTSAVSGANTQLSEFAPRMITVKINPEKIRDVIGKGGSVIRALTEETGTTIDISDDGVVTIASTSSEGMAEAKKRIEQITAEIEVGQVYEGTVLKLLDFGAIVNLLPGKDGLLHISEIVNERVKDINDYLKEGQQVKVKVIQTDEKGRVRLSAKALLNEAAAAAQSDTPPQQ</sequence>
<accession>Q1BV09</accession>
<protein>
    <recommendedName>
        <fullName evidence="1">Polyribonucleotide nucleotidyltransferase</fullName>
        <ecNumber evidence="1">2.7.7.8</ecNumber>
    </recommendedName>
    <alternativeName>
        <fullName evidence="1">Polynucleotide phosphorylase</fullName>
        <shortName evidence="1">PNPase</shortName>
    </alternativeName>
</protein>
<keyword id="KW-0963">Cytoplasm</keyword>
<keyword id="KW-0460">Magnesium</keyword>
<keyword id="KW-0479">Metal-binding</keyword>
<keyword id="KW-0548">Nucleotidyltransferase</keyword>
<keyword id="KW-0694">RNA-binding</keyword>
<keyword id="KW-0808">Transferase</keyword>
<name>PNP_BURO1</name>
<evidence type="ECO:0000255" key="1">
    <source>
        <dbReference type="HAMAP-Rule" id="MF_01595"/>
    </source>
</evidence>
<gene>
    <name evidence="1" type="primary">pnp</name>
    <name type="ordered locus">Bcen_1641</name>
</gene>
<proteinExistence type="inferred from homology"/>